<gene>
    <name evidence="1" type="primary">astD</name>
    <name type="ordered locus">SeHA_C1432</name>
</gene>
<name>ASTD_SALHS</name>
<dbReference type="EC" id="1.2.1.71" evidence="1"/>
<dbReference type="EMBL" id="CP001120">
    <property type="protein sequence ID" value="ACF69813.1"/>
    <property type="molecule type" value="Genomic_DNA"/>
</dbReference>
<dbReference type="RefSeq" id="WP_000177292.1">
    <property type="nucleotide sequence ID" value="NC_011083.1"/>
</dbReference>
<dbReference type="SMR" id="B4TGE2"/>
<dbReference type="KEGG" id="seh:SeHA_C1432"/>
<dbReference type="HOGENOM" id="CLU_005391_1_0_6"/>
<dbReference type="UniPathway" id="UPA00185">
    <property type="reaction ID" value="UER00282"/>
</dbReference>
<dbReference type="Proteomes" id="UP000001866">
    <property type="component" value="Chromosome"/>
</dbReference>
<dbReference type="GO" id="GO:0043824">
    <property type="term" value="F:succinylglutamate-semialdehyde dehydrogenase activity"/>
    <property type="evidence" value="ECO:0007669"/>
    <property type="project" value="UniProtKB-EC"/>
</dbReference>
<dbReference type="GO" id="GO:0019544">
    <property type="term" value="P:arginine catabolic process to glutamate"/>
    <property type="evidence" value="ECO:0007669"/>
    <property type="project" value="UniProtKB-UniRule"/>
</dbReference>
<dbReference type="GO" id="GO:0019545">
    <property type="term" value="P:arginine catabolic process to succinate"/>
    <property type="evidence" value="ECO:0007669"/>
    <property type="project" value="UniProtKB-UniRule"/>
</dbReference>
<dbReference type="CDD" id="cd07095">
    <property type="entry name" value="ALDH_SGSD_AstD"/>
    <property type="match status" value="1"/>
</dbReference>
<dbReference type="FunFam" id="3.40.309.10:FF:000013">
    <property type="entry name" value="N-succinylglutamate 5-semialdehyde dehydrogenase"/>
    <property type="match status" value="1"/>
</dbReference>
<dbReference type="FunFam" id="3.40.605.10:FF:000010">
    <property type="entry name" value="N-succinylglutamate 5-semialdehyde dehydrogenase"/>
    <property type="match status" value="1"/>
</dbReference>
<dbReference type="Gene3D" id="3.40.605.10">
    <property type="entry name" value="Aldehyde Dehydrogenase, Chain A, domain 1"/>
    <property type="match status" value="1"/>
</dbReference>
<dbReference type="Gene3D" id="3.40.309.10">
    <property type="entry name" value="Aldehyde Dehydrogenase, Chain A, domain 2"/>
    <property type="match status" value="1"/>
</dbReference>
<dbReference type="HAMAP" id="MF_01174">
    <property type="entry name" value="Aldedh_AstD"/>
    <property type="match status" value="1"/>
</dbReference>
<dbReference type="InterPro" id="IPR016161">
    <property type="entry name" value="Ald_DH/histidinol_DH"/>
</dbReference>
<dbReference type="InterPro" id="IPR016163">
    <property type="entry name" value="Ald_DH_C"/>
</dbReference>
<dbReference type="InterPro" id="IPR016160">
    <property type="entry name" value="Ald_DH_CS_CYS"/>
</dbReference>
<dbReference type="InterPro" id="IPR029510">
    <property type="entry name" value="Ald_DH_CS_GLU"/>
</dbReference>
<dbReference type="InterPro" id="IPR016162">
    <property type="entry name" value="Ald_DH_N"/>
</dbReference>
<dbReference type="InterPro" id="IPR015590">
    <property type="entry name" value="Aldehyde_DH_dom"/>
</dbReference>
<dbReference type="InterPro" id="IPR017649">
    <property type="entry name" value="SuccinylGlu_semiald_DH_AstD"/>
</dbReference>
<dbReference type="NCBIfam" id="TIGR03240">
    <property type="entry name" value="arg_catab_astD"/>
    <property type="match status" value="1"/>
</dbReference>
<dbReference type="NCBIfam" id="NF006992">
    <property type="entry name" value="PRK09457.1"/>
    <property type="match status" value="1"/>
</dbReference>
<dbReference type="PANTHER" id="PTHR11699">
    <property type="entry name" value="ALDEHYDE DEHYDROGENASE-RELATED"/>
    <property type="match status" value="1"/>
</dbReference>
<dbReference type="Pfam" id="PF00171">
    <property type="entry name" value="Aldedh"/>
    <property type="match status" value="1"/>
</dbReference>
<dbReference type="SUPFAM" id="SSF53720">
    <property type="entry name" value="ALDH-like"/>
    <property type="match status" value="1"/>
</dbReference>
<dbReference type="PROSITE" id="PS00070">
    <property type="entry name" value="ALDEHYDE_DEHYDR_CYS"/>
    <property type="match status" value="1"/>
</dbReference>
<dbReference type="PROSITE" id="PS00687">
    <property type="entry name" value="ALDEHYDE_DEHYDR_GLU"/>
    <property type="match status" value="1"/>
</dbReference>
<feature type="chain" id="PRO_1000138057" description="N-succinylglutamate 5-semialdehyde dehydrogenase">
    <location>
        <begin position="1"/>
        <end position="492"/>
    </location>
</feature>
<feature type="active site" evidence="1">
    <location>
        <position position="243"/>
    </location>
</feature>
<feature type="active site" evidence="1">
    <location>
        <position position="277"/>
    </location>
</feature>
<feature type="binding site" evidence="1">
    <location>
        <begin position="220"/>
        <end position="225"/>
    </location>
    <ligand>
        <name>NAD(+)</name>
        <dbReference type="ChEBI" id="CHEBI:57540"/>
    </ligand>
</feature>
<proteinExistence type="inferred from homology"/>
<protein>
    <recommendedName>
        <fullName evidence="1">N-succinylglutamate 5-semialdehyde dehydrogenase</fullName>
        <ecNumber evidence="1">1.2.1.71</ecNumber>
    </recommendedName>
    <alternativeName>
        <fullName evidence="1">Succinylglutamic semialdehyde dehydrogenase</fullName>
        <shortName evidence="1">SGSD</shortName>
    </alternativeName>
</protein>
<accession>B4TGE2</accession>
<sequence length="492" mass="53107">MTLWINGDWITGQGERRRKTNPVSGEILWQGNDANAAQVAEACQAARAAFPRWARQPFAARQAIVEKFAVLLEAHKAELTEVIARETGKPRWEAATEVTAMINKIAISIKAYHARTGEQKSELVDGAATLRHRPHGVLAVFGPYNFPGHLPNGHIVPALLAGNTLIFKPSELTPWTGETVIKLWERAGLPAGVLNLVQGGRETGQALSSLDDLDGLLFTGSASTGYQLHRQLSGQPEKILALEMGGNNPLIIEDVANIDAAVHLTLQSAFITAGQRCTCARRLLVKQGAQGDAFLARLVDVAGRLQPGRWDDDPQSFIGGLISAQAAQHVMEAWRQREALGGRTLLAPRKVKEGTSLLTPGIIELTGVADVPDEEVFGPLLNVWRYAHFDEAIRLANNTRFGLSCGLVSTDRAQFEQLLLEARAGIVNWNKPLTGAASTAPFGGVGASGNHRPSAWYAADYCAWPMASLESPELTLPATLSPGLDFSRREAV</sequence>
<comment type="function">
    <text evidence="1">Catalyzes the NAD-dependent reduction of succinylglutamate semialdehyde into succinylglutamate.</text>
</comment>
<comment type="catalytic activity">
    <reaction evidence="1">
        <text>N-succinyl-L-glutamate 5-semialdehyde + NAD(+) + H2O = N-succinyl-L-glutamate + NADH + 2 H(+)</text>
        <dbReference type="Rhea" id="RHEA:10812"/>
        <dbReference type="ChEBI" id="CHEBI:15377"/>
        <dbReference type="ChEBI" id="CHEBI:15378"/>
        <dbReference type="ChEBI" id="CHEBI:57540"/>
        <dbReference type="ChEBI" id="CHEBI:57945"/>
        <dbReference type="ChEBI" id="CHEBI:58520"/>
        <dbReference type="ChEBI" id="CHEBI:58763"/>
        <dbReference type="EC" id="1.2.1.71"/>
    </reaction>
</comment>
<comment type="pathway">
    <text evidence="1">Amino-acid degradation; L-arginine degradation via AST pathway; L-glutamate and succinate from L-arginine: step 4/5.</text>
</comment>
<comment type="similarity">
    <text evidence="1">Belongs to the aldehyde dehydrogenase family. AstD subfamily.</text>
</comment>
<keyword id="KW-0056">Arginine metabolism</keyword>
<keyword id="KW-0520">NAD</keyword>
<keyword id="KW-0560">Oxidoreductase</keyword>
<evidence type="ECO:0000255" key="1">
    <source>
        <dbReference type="HAMAP-Rule" id="MF_01174"/>
    </source>
</evidence>
<organism>
    <name type="scientific">Salmonella heidelberg (strain SL476)</name>
    <dbReference type="NCBI Taxonomy" id="454169"/>
    <lineage>
        <taxon>Bacteria</taxon>
        <taxon>Pseudomonadati</taxon>
        <taxon>Pseudomonadota</taxon>
        <taxon>Gammaproteobacteria</taxon>
        <taxon>Enterobacterales</taxon>
        <taxon>Enterobacteriaceae</taxon>
        <taxon>Salmonella</taxon>
    </lineage>
</organism>
<reference key="1">
    <citation type="journal article" date="2011" name="J. Bacteriol.">
        <title>Comparative genomics of 28 Salmonella enterica isolates: evidence for CRISPR-mediated adaptive sublineage evolution.</title>
        <authorList>
            <person name="Fricke W.F."/>
            <person name="Mammel M.K."/>
            <person name="McDermott P.F."/>
            <person name="Tartera C."/>
            <person name="White D.G."/>
            <person name="Leclerc J.E."/>
            <person name="Ravel J."/>
            <person name="Cebula T.A."/>
        </authorList>
    </citation>
    <scope>NUCLEOTIDE SEQUENCE [LARGE SCALE GENOMIC DNA]</scope>
    <source>
        <strain>SL476</strain>
    </source>
</reference>